<accession>Q4FFP1</accession>
<protein>
    <recommendedName>
        <fullName evidence="2">Photosystem II D2 protein</fullName>
        <shortName evidence="2">PSII D2 protein</shortName>
        <ecNumber evidence="2">1.10.3.9</ecNumber>
    </recommendedName>
    <alternativeName>
        <fullName evidence="2">Photosystem Q(A) protein</fullName>
    </alternativeName>
</protein>
<keyword id="KW-0007">Acetylation</keyword>
<keyword id="KW-0148">Chlorophyll</keyword>
<keyword id="KW-0150">Chloroplast</keyword>
<keyword id="KW-0157">Chromophore</keyword>
<keyword id="KW-0249">Electron transport</keyword>
<keyword id="KW-0408">Iron</keyword>
<keyword id="KW-0460">Magnesium</keyword>
<keyword id="KW-0472">Membrane</keyword>
<keyword id="KW-0479">Metal-binding</keyword>
<keyword id="KW-0560">Oxidoreductase</keyword>
<keyword id="KW-0597">Phosphoprotein</keyword>
<keyword id="KW-0602">Photosynthesis</keyword>
<keyword id="KW-0604">Photosystem II</keyword>
<keyword id="KW-0934">Plastid</keyword>
<keyword id="KW-0793">Thylakoid</keyword>
<keyword id="KW-0812">Transmembrane</keyword>
<keyword id="KW-1133">Transmembrane helix</keyword>
<keyword id="KW-0813">Transport</keyword>
<proteinExistence type="inferred from homology"/>
<dbReference type="EC" id="1.10.3.9" evidence="2"/>
<dbReference type="EMBL" id="DQ069640">
    <property type="protein sequence ID" value="AAZ04072.1"/>
    <property type="molecule type" value="Genomic_DNA"/>
</dbReference>
<dbReference type="EMBL" id="DQ359689">
    <property type="protein sequence ID" value="ABC70751.1"/>
    <property type="molecule type" value="Genomic_DNA"/>
</dbReference>
<dbReference type="RefSeq" id="YP_001004181.1">
    <property type="nucleotide sequence ID" value="NC_008796.1"/>
</dbReference>
<dbReference type="SMR" id="Q4FFP1"/>
<dbReference type="GeneID" id="4712164"/>
<dbReference type="GO" id="GO:0009535">
    <property type="term" value="C:chloroplast thylakoid membrane"/>
    <property type="evidence" value="ECO:0007669"/>
    <property type="project" value="UniProtKB-SubCell"/>
</dbReference>
<dbReference type="GO" id="GO:0009523">
    <property type="term" value="C:photosystem II"/>
    <property type="evidence" value="ECO:0007669"/>
    <property type="project" value="UniProtKB-KW"/>
</dbReference>
<dbReference type="GO" id="GO:0016168">
    <property type="term" value="F:chlorophyll binding"/>
    <property type="evidence" value="ECO:0007669"/>
    <property type="project" value="UniProtKB-UniRule"/>
</dbReference>
<dbReference type="GO" id="GO:0045156">
    <property type="term" value="F:electron transporter, transferring electrons within the cyclic electron transport pathway of photosynthesis activity"/>
    <property type="evidence" value="ECO:0007669"/>
    <property type="project" value="InterPro"/>
</dbReference>
<dbReference type="GO" id="GO:0005506">
    <property type="term" value="F:iron ion binding"/>
    <property type="evidence" value="ECO:0007669"/>
    <property type="project" value="UniProtKB-UniRule"/>
</dbReference>
<dbReference type="GO" id="GO:0010242">
    <property type="term" value="F:oxygen evolving activity"/>
    <property type="evidence" value="ECO:0007669"/>
    <property type="project" value="UniProtKB-EC"/>
</dbReference>
<dbReference type="GO" id="GO:0009772">
    <property type="term" value="P:photosynthetic electron transport in photosystem II"/>
    <property type="evidence" value="ECO:0007669"/>
    <property type="project" value="InterPro"/>
</dbReference>
<dbReference type="CDD" id="cd09288">
    <property type="entry name" value="Photosystem-II_D2"/>
    <property type="match status" value="1"/>
</dbReference>
<dbReference type="FunFam" id="1.20.85.10:FF:000001">
    <property type="entry name" value="photosystem II D2 protein-like"/>
    <property type="match status" value="1"/>
</dbReference>
<dbReference type="Gene3D" id="1.20.85.10">
    <property type="entry name" value="Photosystem II protein D1-like"/>
    <property type="match status" value="1"/>
</dbReference>
<dbReference type="HAMAP" id="MF_01383">
    <property type="entry name" value="PSII_PsbD_D2"/>
    <property type="match status" value="1"/>
</dbReference>
<dbReference type="InterPro" id="IPR055266">
    <property type="entry name" value="D1/D2"/>
</dbReference>
<dbReference type="InterPro" id="IPR036854">
    <property type="entry name" value="Photo_II_D1/D2_sf"/>
</dbReference>
<dbReference type="InterPro" id="IPR000484">
    <property type="entry name" value="Photo_RC_L/M"/>
</dbReference>
<dbReference type="InterPro" id="IPR055265">
    <property type="entry name" value="Photo_RC_L/M_CS"/>
</dbReference>
<dbReference type="InterPro" id="IPR005868">
    <property type="entry name" value="PSII_PsbD/D2"/>
</dbReference>
<dbReference type="NCBIfam" id="TIGR01152">
    <property type="entry name" value="psbD"/>
    <property type="match status" value="1"/>
</dbReference>
<dbReference type="PANTHER" id="PTHR33149:SF12">
    <property type="entry name" value="PHOTOSYSTEM II D2 PROTEIN"/>
    <property type="match status" value="1"/>
</dbReference>
<dbReference type="PANTHER" id="PTHR33149">
    <property type="entry name" value="PHOTOSYSTEM II PROTEIN D1"/>
    <property type="match status" value="1"/>
</dbReference>
<dbReference type="Pfam" id="PF00124">
    <property type="entry name" value="Photo_RC"/>
    <property type="match status" value="1"/>
</dbReference>
<dbReference type="PRINTS" id="PR00256">
    <property type="entry name" value="REACTNCENTRE"/>
</dbReference>
<dbReference type="SUPFAM" id="SSF81483">
    <property type="entry name" value="Bacterial photosystem II reaction centre, L and M subunits"/>
    <property type="match status" value="1"/>
</dbReference>
<dbReference type="PROSITE" id="PS00244">
    <property type="entry name" value="REACTION_CENTER"/>
    <property type="match status" value="1"/>
</dbReference>
<comment type="function">
    <text evidence="2">Photosystem II (PSII) is a light-driven water:plastoquinone oxidoreductase that uses light energy to abstract electrons from H(2)O, generating O(2) and a proton gradient subsequently used for ATP formation. It consists of a core antenna complex that captures photons, and an electron transfer chain that converts photonic excitation into a charge separation. The D1/D2 (PsbA/PsbD) reaction center heterodimer binds P680, the primary electron donor of PSII as well as several subsequent electron acceptors. D2 is needed for assembly of a stable PSII complex.</text>
</comment>
<comment type="catalytic activity">
    <reaction evidence="2">
        <text>2 a plastoquinone + 4 hnu + 2 H2O = 2 a plastoquinol + O2</text>
        <dbReference type="Rhea" id="RHEA:36359"/>
        <dbReference type="Rhea" id="RHEA-COMP:9561"/>
        <dbReference type="Rhea" id="RHEA-COMP:9562"/>
        <dbReference type="ChEBI" id="CHEBI:15377"/>
        <dbReference type="ChEBI" id="CHEBI:15379"/>
        <dbReference type="ChEBI" id="CHEBI:17757"/>
        <dbReference type="ChEBI" id="CHEBI:30212"/>
        <dbReference type="ChEBI" id="CHEBI:62192"/>
        <dbReference type="EC" id="1.10.3.9"/>
    </reaction>
</comment>
<comment type="cofactor">
    <text evidence="2">The D1/D2 heterodimer binds P680, chlorophylls that are the primary electron donor of PSII, and subsequent electron acceptors. It shares a non-heme iron and each subunit binds pheophytin, quinone, additional chlorophylls, carotenoids and lipids. There is also a Cl(-1) ion associated with D1 and D2, which is required for oxygen evolution. The PSII complex binds additional chlorophylls, carotenoids and specific lipids.</text>
</comment>
<comment type="subunit">
    <text evidence="2">PSII is composed of 1 copy each of membrane proteins PsbA, PsbB, PsbC, PsbD, PsbE, PsbF, PsbH, PsbI, PsbJ, PsbK, PsbL, PsbM, PsbT, PsbX, PsbY, PsbZ, Psb30/Ycf12, at least 3 peripheral proteins of the oxygen-evolving complex and a large number of cofactors. It forms dimeric complexes.</text>
</comment>
<comment type="subcellular location">
    <subcellularLocation>
        <location evidence="2">Plastid</location>
        <location evidence="2">Chloroplast thylakoid membrane</location>
        <topology evidence="2">Multi-pass membrane protein</topology>
    </subcellularLocation>
</comment>
<comment type="miscellaneous">
    <text evidence="2">2 of the reaction center chlorophylls (ChlD1 and ChlD2) are entirely coordinated by water.</text>
</comment>
<comment type="similarity">
    <text evidence="2">Belongs to the reaction center PufL/M/PsbA/D family.</text>
</comment>
<name>PSBD_RANMC</name>
<geneLocation type="chloroplast"/>
<organism>
    <name type="scientific">Ranunculus macranthus</name>
    <name type="common">Large buttercup</name>
    <dbReference type="NCBI Taxonomy" id="334596"/>
    <lineage>
        <taxon>Eukaryota</taxon>
        <taxon>Viridiplantae</taxon>
        <taxon>Streptophyta</taxon>
        <taxon>Embryophyta</taxon>
        <taxon>Tracheophyta</taxon>
        <taxon>Spermatophyta</taxon>
        <taxon>Magnoliopsida</taxon>
        <taxon>Ranunculales</taxon>
        <taxon>Ranunculaceae</taxon>
        <taxon>Ranunculoideae</taxon>
        <taxon>Ranunculeae</taxon>
        <taxon>Ranunculus</taxon>
    </lineage>
</organism>
<sequence>MTIALGRFTKDEKDLFDTMDDWLRRDRFVFVGWSGLLLFPCAYFALGGWFTGTTFVTSWYTHGLASSYLEGCNFLTAAVSTPANSLAHSLLLLWGPEAQGDFTRWCQLGGLWTFVALHGAFGLIGFMLRQFELARSVQLRPYNAIAFSGPIAVFVSVFLIYPLGQSGWFFAPSFGVAAIFRFILFFQGFHNWTLNPFHMMGVAGVLGAALLCAIHGATVENTLFEDGDGANTFRAFNPTQAEETYSMVTANRFWSQIFGVAFSNKRWLHFFMLFVPVTGLWMSALGVVGLALNLRAYDFVSQEIRAAEDPEFETFYTKNILLNEGIRAWMAAQDQPHENLIFPEEVLPRGNAL</sequence>
<gene>
    <name evidence="2" type="primary">psbD</name>
</gene>
<feature type="initiator methionine" description="Removed" evidence="1">
    <location>
        <position position="1"/>
    </location>
</feature>
<feature type="chain" id="PRO_0000359693" description="Photosystem II D2 protein">
    <location>
        <begin position="2"/>
        <end position="353"/>
    </location>
</feature>
<feature type="transmembrane region" description="Helical" evidence="2">
    <location>
        <begin position="41"/>
        <end position="61"/>
    </location>
</feature>
<feature type="transmembrane region" description="Helical" evidence="2">
    <location>
        <begin position="125"/>
        <end position="141"/>
    </location>
</feature>
<feature type="transmembrane region" description="Helical" evidence="2">
    <location>
        <begin position="153"/>
        <end position="166"/>
    </location>
</feature>
<feature type="transmembrane region" description="Helical" evidence="2">
    <location>
        <begin position="208"/>
        <end position="228"/>
    </location>
</feature>
<feature type="transmembrane region" description="Helical" evidence="2">
    <location>
        <begin position="279"/>
        <end position="295"/>
    </location>
</feature>
<feature type="binding site" description="axial binding residue" evidence="2">
    <location>
        <position position="118"/>
    </location>
    <ligand>
        <name>chlorophyll a</name>
        <dbReference type="ChEBI" id="CHEBI:58416"/>
        <label>ChlzD2</label>
    </ligand>
    <ligandPart>
        <name>Mg</name>
        <dbReference type="ChEBI" id="CHEBI:25107"/>
    </ligandPart>
</feature>
<feature type="binding site" evidence="2">
    <location>
        <position position="130"/>
    </location>
    <ligand>
        <name>pheophytin a</name>
        <dbReference type="ChEBI" id="CHEBI:136840"/>
        <label>D2</label>
    </ligand>
</feature>
<feature type="binding site" evidence="2">
    <location>
        <position position="143"/>
    </location>
    <ligand>
        <name>pheophytin a</name>
        <dbReference type="ChEBI" id="CHEBI:136840"/>
        <label>D2</label>
    </ligand>
</feature>
<feature type="binding site" description="axial binding residue" evidence="2">
    <location>
        <position position="198"/>
    </location>
    <ligand>
        <name>chlorophyll a</name>
        <dbReference type="ChEBI" id="CHEBI:58416"/>
        <label>PD2</label>
    </ligand>
    <ligandPart>
        <name>Mg</name>
        <dbReference type="ChEBI" id="CHEBI:25107"/>
    </ligandPart>
</feature>
<feature type="binding site" evidence="2">
    <location>
        <position position="215"/>
    </location>
    <ligand>
        <name>a plastoquinone</name>
        <dbReference type="ChEBI" id="CHEBI:17757"/>
        <label>Q(A)</label>
    </ligand>
</feature>
<feature type="binding site" evidence="2">
    <location>
        <position position="215"/>
    </location>
    <ligand>
        <name>Fe cation</name>
        <dbReference type="ChEBI" id="CHEBI:24875"/>
        <note>ligand shared with heterodimeric partner</note>
    </ligand>
</feature>
<feature type="binding site" evidence="2">
    <location>
        <position position="262"/>
    </location>
    <ligand>
        <name>a plastoquinone</name>
        <dbReference type="ChEBI" id="CHEBI:17757"/>
        <label>Q(A)</label>
    </ligand>
</feature>
<feature type="binding site" evidence="2">
    <location>
        <position position="269"/>
    </location>
    <ligand>
        <name>Fe cation</name>
        <dbReference type="ChEBI" id="CHEBI:24875"/>
        <note>ligand shared with heterodimeric partner</note>
    </ligand>
</feature>
<feature type="modified residue" description="N-acetylthreonine" evidence="1">
    <location>
        <position position="2"/>
    </location>
</feature>
<feature type="modified residue" description="Phosphothreonine" evidence="1">
    <location>
        <position position="2"/>
    </location>
</feature>
<reference key="1">
    <citation type="journal article" date="2005" name="Mol. Biol. Evol.">
        <title>Identifying the basal angiosperm node in chloroplast genome phylogenies: sampling one's way out of the Felsenstein zone.</title>
        <authorList>
            <person name="Leebens-Mack J."/>
            <person name="Raubeson L.A."/>
            <person name="Cui L."/>
            <person name="Kuehl J.V."/>
            <person name="Fourcade M.H."/>
            <person name="Chumley T.W."/>
            <person name="Boore J.L."/>
            <person name="Jansen R.K."/>
            <person name="dePamphilis C.W."/>
        </authorList>
    </citation>
    <scope>NUCLEOTIDE SEQUENCE [GENOMIC DNA]</scope>
</reference>
<reference key="2">
    <citation type="journal article" date="2007" name="BMC Genomics">
        <title>Comparative chloroplast genomics: analyses including new sequences from the angiosperms Nuphar advena and Ranunculus macranthus.</title>
        <authorList>
            <person name="Raubeson L.A."/>
            <person name="Peery R."/>
            <person name="Chumley T.W."/>
            <person name="Dziubek C."/>
            <person name="Fourcade H.M."/>
            <person name="Boore J.L."/>
            <person name="Jansen R.K."/>
        </authorList>
    </citation>
    <scope>NUCLEOTIDE SEQUENCE [LARGE SCALE GENOMIC DNA]</scope>
</reference>
<evidence type="ECO:0000250" key="1">
    <source>
        <dbReference type="UniProtKB" id="P56761"/>
    </source>
</evidence>
<evidence type="ECO:0000255" key="2">
    <source>
        <dbReference type="HAMAP-Rule" id="MF_01383"/>
    </source>
</evidence>